<feature type="chain" id="PRO_1000011544" description="4-hydroxy-3-methylbut-2-en-1-yl diphosphate synthase (flavodoxin)">
    <location>
        <begin position="1"/>
        <end position="421"/>
    </location>
</feature>
<feature type="binding site" evidence="1">
    <location>
        <position position="311"/>
    </location>
    <ligand>
        <name>[4Fe-4S] cluster</name>
        <dbReference type="ChEBI" id="CHEBI:49883"/>
    </ligand>
</feature>
<feature type="binding site" evidence="1">
    <location>
        <position position="314"/>
    </location>
    <ligand>
        <name>[4Fe-4S] cluster</name>
        <dbReference type="ChEBI" id="CHEBI:49883"/>
    </ligand>
</feature>
<feature type="binding site" evidence="1">
    <location>
        <position position="357"/>
    </location>
    <ligand>
        <name>[4Fe-4S] cluster</name>
        <dbReference type="ChEBI" id="CHEBI:49883"/>
    </ligand>
</feature>
<feature type="binding site" evidence="1">
    <location>
        <position position="364"/>
    </location>
    <ligand>
        <name>[4Fe-4S] cluster</name>
        <dbReference type="ChEBI" id="CHEBI:49883"/>
    </ligand>
</feature>
<gene>
    <name evidence="1" type="primary">ispG</name>
    <name type="ordered locus">XOO2095</name>
</gene>
<dbReference type="EC" id="1.17.7.3" evidence="1"/>
<dbReference type="EMBL" id="AP008229">
    <property type="protein sequence ID" value="BAE68850.1"/>
    <property type="molecule type" value="Genomic_DNA"/>
</dbReference>
<dbReference type="RefSeq" id="WP_011408474.1">
    <property type="nucleotide sequence ID" value="NC_007705.1"/>
</dbReference>
<dbReference type="SMR" id="Q2P3M7"/>
<dbReference type="KEGG" id="xom:XOO2095"/>
<dbReference type="HOGENOM" id="CLU_042258_1_0_6"/>
<dbReference type="UniPathway" id="UPA00056">
    <property type="reaction ID" value="UER00096"/>
</dbReference>
<dbReference type="GO" id="GO:0051539">
    <property type="term" value="F:4 iron, 4 sulfur cluster binding"/>
    <property type="evidence" value="ECO:0007669"/>
    <property type="project" value="UniProtKB-UniRule"/>
</dbReference>
<dbReference type="GO" id="GO:0046429">
    <property type="term" value="F:4-hydroxy-3-methylbut-2-en-1-yl diphosphate synthase activity (ferredoxin)"/>
    <property type="evidence" value="ECO:0007669"/>
    <property type="project" value="UniProtKB-UniRule"/>
</dbReference>
<dbReference type="GO" id="GO:0141197">
    <property type="term" value="F:4-hydroxy-3-methylbut-2-enyl-diphosphate synthase activity (flavodoxin)"/>
    <property type="evidence" value="ECO:0007669"/>
    <property type="project" value="UniProtKB-EC"/>
</dbReference>
<dbReference type="GO" id="GO:0005506">
    <property type="term" value="F:iron ion binding"/>
    <property type="evidence" value="ECO:0007669"/>
    <property type="project" value="InterPro"/>
</dbReference>
<dbReference type="GO" id="GO:0019288">
    <property type="term" value="P:isopentenyl diphosphate biosynthetic process, methylerythritol 4-phosphate pathway"/>
    <property type="evidence" value="ECO:0007669"/>
    <property type="project" value="UniProtKB-UniRule"/>
</dbReference>
<dbReference type="GO" id="GO:0016114">
    <property type="term" value="P:terpenoid biosynthetic process"/>
    <property type="evidence" value="ECO:0007669"/>
    <property type="project" value="InterPro"/>
</dbReference>
<dbReference type="FunFam" id="3.20.20.20:FF:000001">
    <property type="entry name" value="4-hydroxy-3-methylbut-2-en-1-yl diphosphate synthase (flavodoxin)"/>
    <property type="match status" value="1"/>
</dbReference>
<dbReference type="FunFam" id="3.30.413.10:FF:000012">
    <property type="entry name" value="4-hydroxy-3-methylbut-2-en-1-yl diphosphate synthase (flavodoxin)"/>
    <property type="match status" value="1"/>
</dbReference>
<dbReference type="Gene3D" id="3.20.20.20">
    <property type="entry name" value="Dihydropteroate synthase-like"/>
    <property type="match status" value="1"/>
</dbReference>
<dbReference type="Gene3D" id="3.30.413.10">
    <property type="entry name" value="Sulfite Reductase Hemoprotein, domain 1"/>
    <property type="match status" value="1"/>
</dbReference>
<dbReference type="HAMAP" id="MF_00159">
    <property type="entry name" value="IspG"/>
    <property type="match status" value="1"/>
</dbReference>
<dbReference type="InterPro" id="IPR011005">
    <property type="entry name" value="Dihydropteroate_synth-like_sf"/>
</dbReference>
<dbReference type="InterPro" id="IPR016425">
    <property type="entry name" value="IspG_bac"/>
</dbReference>
<dbReference type="InterPro" id="IPR004588">
    <property type="entry name" value="IspG_bac-typ"/>
</dbReference>
<dbReference type="InterPro" id="IPR045854">
    <property type="entry name" value="NO2/SO3_Rdtase_4Fe4S_sf"/>
</dbReference>
<dbReference type="NCBIfam" id="TIGR00612">
    <property type="entry name" value="ispG_gcpE"/>
    <property type="match status" value="1"/>
</dbReference>
<dbReference type="NCBIfam" id="NF001540">
    <property type="entry name" value="PRK00366.1"/>
    <property type="match status" value="1"/>
</dbReference>
<dbReference type="PANTHER" id="PTHR30454">
    <property type="entry name" value="4-HYDROXY-3-METHYLBUT-2-EN-1-YL DIPHOSPHATE SYNTHASE"/>
    <property type="match status" value="1"/>
</dbReference>
<dbReference type="PANTHER" id="PTHR30454:SF0">
    <property type="entry name" value="4-HYDROXY-3-METHYLBUT-2-EN-1-YL DIPHOSPHATE SYNTHASE (FERREDOXIN), CHLOROPLASTIC"/>
    <property type="match status" value="1"/>
</dbReference>
<dbReference type="Pfam" id="PF04551">
    <property type="entry name" value="GcpE"/>
    <property type="match status" value="1"/>
</dbReference>
<dbReference type="PIRSF" id="PIRSF004640">
    <property type="entry name" value="IspG"/>
    <property type="match status" value="1"/>
</dbReference>
<evidence type="ECO:0000255" key="1">
    <source>
        <dbReference type="HAMAP-Rule" id="MF_00159"/>
    </source>
</evidence>
<protein>
    <recommendedName>
        <fullName evidence="1">4-hydroxy-3-methylbut-2-en-1-yl diphosphate synthase (flavodoxin)</fullName>
        <ecNumber evidence="1">1.17.7.3</ecNumber>
    </recommendedName>
    <alternativeName>
        <fullName evidence="1">1-hydroxy-2-methyl-2-(E)-butenyl 4-diphosphate synthase</fullName>
    </alternativeName>
</protein>
<organism>
    <name type="scientific">Xanthomonas oryzae pv. oryzae (strain MAFF 311018)</name>
    <dbReference type="NCBI Taxonomy" id="342109"/>
    <lineage>
        <taxon>Bacteria</taxon>
        <taxon>Pseudomonadati</taxon>
        <taxon>Pseudomonadota</taxon>
        <taxon>Gammaproteobacteria</taxon>
        <taxon>Lysobacterales</taxon>
        <taxon>Lysobacteraceae</taxon>
        <taxon>Xanthomonas</taxon>
    </lineage>
</organism>
<keyword id="KW-0004">4Fe-4S</keyword>
<keyword id="KW-0408">Iron</keyword>
<keyword id="KW-0411">Iron-sulfur</keyword>
<keyword id="KW-0414">Isoprene biosynthesis</keyword>
<keyword id="KW-0479">Metal-binding</keyword>
<keyword id="KW-0560">Oxidoreductase</keyword>
<sequence>MHDAVTRPTPPADATAWPRRITQAVKIGGVTVGGGHPVVVQSMTNTDTADIAGSVKQVADLWRAGSEMVRLTVNNAESAAAIPRIVDKLRMMGIDVPLIGDFHYNGHQLLAAEPACAEALAKYRINPGNVGFGKKKDLQFGQLIECAIKYDKPVRIGANWGSLDQSLAAQLMDENAQRETPWDAGRVLREALIRSALDSAERAVELGLPRERIILSAKVSGVQELIAVYRDMASRCDFALHLGLTEAGIGSKGIVASAAALSVLLQEGIGDTIRISLTPEPGQSRTHEVIVAQELLQTTGQRAFTPMVTACPGCGRTTSEFFQELAGVVQNHVRAKMPEWKITNPGAENMTLAVMGCVVNGPGESRHANIGISLPGTGEAPSAPVFIDGEKSVILRGENIAQEFIGLIDQYVERTYARRAG</sequence>
<comment type="function">
    <text evidence="1">Converts 2C-methyl-D-erythritol 2,4-cyclodiphosphate (ME-2,4cPP) into 1-hydroxy-2-methyl-2-(E)-butenyl 4-diphosphate.</text>
</comment>
<comment type="catalytic activity">
    <reaction evidence="1">
        <text>(2E)-4-hydroxy-3-methylbut-2-enyl diphosphate + oxidized [flavodoxin] + H2O + 2 H(+) = 2-C-methyl-D-erythritol 2,4-cyclic diphosphate + reduced [flavodoxin]</text>
        <dbReference type="Rhea" id="RHEA:43604"/>
        <dbReference type="Rhea" id="RHEA-COMP:10622"/>
        <dbReference type="Rhea" id="RHEA-COMP:10623"/>
        <dbReference type="ChEBI" id="CHEBI:15377"/>
        <dbReference type="ChEBI" id="CHEBI:15378"/>
        <dbReference type="ChEBI" id="CHEBI:57618"/>
        <dbReference type="ChEBI" id="CHEBI:58210"/>
        <dbReference type="ChEBI" id="CHEBI:58483"/>
        <dbReference type="ChEBI" id="CHEBI:128753"/>
        <dbReference type="EC" id="1.17.7.3"/>
    </reaction>
</comment>
<comment type="cofactor">
    <cofactor evidence="1">
        <name>[4Fe-4S] cluster</name>
        <dbReference type="ChEBI" id="CHEBI:49883"/>
    </cofactor>
    <text evidence="1">Binds 1 [4Fe-4S] cluster.</text>
</comment>
<comment type="pathway">
    <text evidence="1">Isoprenoid biosynthesis; isopentenyl diphosphate biosynthesis via DXP pathway; isopentenyl diphosphate from 1-deoxy-D-xylulose 5-phosphate: step 5/6.</text>
</comment>
<comment type="similarity">
    <text evidence="1">Belongs to the IspG family.</text>
</comment>
<name>ISPG_XANOM</name>
<proteinExistence type="inferred from homology"/>
<accession>Q2P3M7</accession>
<reference key="1">
    <citation type="journal article" date="2005" name="Jpn. Agric. Res. Q.">
        <title>Genome sequence of Xanthomonas oryzae pv. oryzae suggests contribution of large numbers of effector genes and insertion sequences to its race diversity.</title>
        <authorList>
            <person name="Ochiai H."/>
            <person name="Inoue Y."/>
            <person name="Takeya M."/>
            <person name="Sasaki A."/>
            <person name="Kaku H."/>
        </authorList>
    </citation>
    <scope>NUCLEOTIDE SEQUENCE [LARGE SCALE GENOMIC DNA]</scope>
    <source>
        <strain>MAFF 311018</strain>
    </source>
</reference>